<sequence length="327" mass="36917">MTNEVKENTPLLNAIGLKKYYPVKKGLFAKPQQVKALDGVSFQLERGKTLAVVGESGCGKSTLGRLLTMIEEPTKGELYYKGHNFLENDSETKALRRKKIQIVFQNPYASLNPRKKIGSILEEPLIINTKLSAKERREKVLSMMEKVGLRAEFYDRYPHMFSGGQRQRIAIARGLMLDPDVVVADEPVSALDVSVRAQVLNLMMDLQDELGLSYVFISHDLSVVEHIADEVMVMYLGRCIEKGTTEQIFSNPQHPYTKALLSATPRLSPNLRRERIKLTGELPSPINPPKGCAFNPRCWKATEKCRENQPHLEQHTDGKLIACFHID</sequence>
<gene>
    <name type="primary">dppF</name>
    <name type="ordered locus">HI_1184</name>
</gene>
<keyword id="KW-0067">ATP-binding</keyword>
<keyword id="KW-0997">Cell inner membrane</keyword>
<keyword id="KW-1003">Cell membrane</keyword>
<keyword id="KW-0472">Membrane</keyword>
<keyword id="KW-0547">Nucleotide-binding</keyword>
<keyword id="KW-0571">Peptide transport</keyword>
<keyword id="KW-0653">Protein transport</keyword>
<keyword id="KW-1185">Reference proteome</keyword>
<keyword id="KW-1278">Translocase</keyword>
<keyword id="KW-0813">Transport</keyword>
<proteinExistence type="inferred from homology"/>
<feature type="chain" id="PRO_0000092318" description="Dipeptide transport ATP-binding protein DppF">
    <location>
        <begin position="1"/>
        <end position="327"/>
    </location>
</feature>
<feature type="domain" description="ABC transporter" evidence="2">
    <location>
        <begin position="12"/>
        <end position="261"/>
    </location>
</feature>
<feature type="binding site" evidence="2">
    <location>
        <begin position="54"/>
        <end position="61"/>
    </location>
    <ligand>
        <name>ATP</name>
        <dbReference type="ChEBI" id="CHEBI:30616"/>
    </ligand>
</feature>
<evidence type="ECO:0000250" key="1">
    <source>
        <dbReference type="UniProtKB" id="P37313"/>
    </source>
</evidence>
<evidence type="ECO:0000255" key="2">
    <source>
        <dbReference type="PROSITE-ProRule" id="PRU00434"/>
    </source>
</evidence>
<evidence type="ECO:0000305" key="3"/>
<dbReference type="EC" id="7.4.2.9" evidence="1"/>
<dbReference type="EMBL" id="L42023">
    <property type="protein sequence ID" value="AAC22837.1"/>
    <property type="molecule type" value="Genomic_DNA"/>
</dbReference>
<dbReference type="EMBL" id="U17295">
    <property type="protein sequence ID" value="AAA95975.1"/>
    <property type="molecule type" value="Genomic_DNA"/>
</dbReference>
<dbReference type="PIR" id="E64188">
    <property type="entry name" value="E64188"/>
</dbReference>
<dbReference type="RefSeq" id="NP_439340.1">
    <property type="nucleotide sequence ID" value="NC_000907.1"/>
</dbReference>
<dbReference type="SMR" id="P45094"/>
<dbReference type="STRING" id="71421.HI_1184"/>
<dbReference type="TCDB" id="3.A.1.5.27">
    <property type="family name" value="the atp-binding cassette (abc) superfamily"/>
</dbReference>
<dbReference type="EnsemblBacteria" id="AAC22837">
    <property type="protein sequence ID" value="AAC22837"/>
    <property type="gene ID" value="HI_1184"/>
</dbReference>
<dbReference type="KEGG" id="hin:HI_1184"/>
<dbReference type="PATRIC" id="fig|71421.8.peg.1235"/>
<dbReference type="eggNOG" id="COG4608">
    <property type="taxonomic scope" value="Bacteria"/>
</dbReference>
<dbReference type="HOGENOM" id="CLU_000604_1_23_6"/>
<dbReference type="OrthoDB" id="9784450at2"/>
<dbReference type="PhylomeDB" id="P45094"/>
<dbReference type="BioCyc" id="HINF71421:G1GJ1-1215-MONOMER"/>
<dbReference type="Proteomes" id="UP000000579">
    <property type="component" value="Chromosome"/>
</dbReference>
<dbReference type="GO" id="GO:0005886">
    <property type="term" value="C:plasma membrane"/>
    <property type="evidence" value="ECO:0007669"/>
    <property type="project" value="UniProtKB-SubCell"/>
</dbReference>
<dbReference type="GO" id="GO:0005524">
    <property type="term" value="F:ATP binding"/>
    <property type="evidence" value="ECO:0007669"/>
    <property type="project" value="UniProtKB-KW"/>
</dbReference>
<dbReference type="GO" id="GO:0016887">
    <property type="term" value="F:ATP hydrolysis activity"/>
    <property type="evidence" value="ECO:0007669"/>
    <property type="project" value="InterPro"/>
</dbReference>
<dbReference type="GO" id="GO:0015833">
    <property type="term" value="P:peptide transport"/>
    <property type="evidence" value="ECO:0007669"/>
    <property type="project" value="UniProtKB-KW"/>
</dbReference>
<dbReference type="GO" id="GO:0015031">
    <property type="term" value="P:protein transport"/>
    <property type="evidence" value="ECO:0007669"/>
    <property type="project" value="UniProtKB-KW"/>
</dbReference>
<dbReference type="GO" id="GO:0055085">
    <property type="term" value="P:transmembrane transport"/>
    <property type="evidence" value="ECO:0007669"/>
    <property type="project" value="UniProtKB-ARBA"/>
</dbReference>
<dbReference type="CDD" id="cd03257">
    <property type="entry name" value="ABC_NikE_OppD_transporters"/>
    <property type="match status" value="1"/>
</dbReference>
<dbReference type="FunFam" id="3.40.50.300:FF:000016">
    <property type="entry name" value="Oligopeptide ABC transporter ATP-binding component"/>
    <property type="match status" value="1"/>
</dbReference>
<dbReference type="Gene3D" id="3.40.50.300">
    <property type="entry name" value="P-loop containing nucleotide triphosphate hydrolases"/>
    <property type="match status" value="1"/>
</dbReference>
<dbReference type="InterPro" id="IPR003593">
    <property type="entry name" value="AAA+_ATPase"/>
</dbReference>
<dbReference type="InterPro" id="IPR050319">
    <property type="entry name" value="ABC_transp_ATP-bind"/>
</dbReference>
<dbReference type="InterPro" id="IPR003439">
    <property type="entry name" value="ABC_transporter-like_ATP-bd"/>
</dbReference>
<dbReference type="InterPro" id="IPR017871">
    <property type="entry name" value="ABC_transporter-like_CS"/>
</dbReference>
<dbReference type="InterPro" id="IPR013563">
    <property type="entry name" value="Oligopep_ABC_C"/>
</dbReference>
<dbReference type="InterPro" id="IPR027417">
    <property type="entry name" value="P-loop_NTPase"/>
</dbReference>
<dbReference type="NCBIfam" id="TIGR01727">
    <property type="entry name" value="oligo_HPY"/>
    <property type="match status" value="1"/>
</dbReference>
<dbReference type="NCBIfam" id="NF008453">
    <property type="entry name" value="PRK11308.1"/>
    <property type="match status" value="1"/>
</dbReference>
<dbReference type="PANTHER" id="PTHR43776:SF6">
    <property type="entry name" value="DIPEPTIDE TRANSPORT ATP-BINDING PROTEIN DPPF"/>
    <property type="match status" value="1"/>
</dbReference>
<dbReference type="PANTHER" id="PTHR43776">
    <property type="entry name" value="TRANSPORT ATP-BINDING PROTEIN"/>
    <property type="match status" value="1"/>
</dbReference>
<dbReference type="Pfam" id="PF00005">
    <property type="entry name" value="ABC_tran"/>
    <property type="match status" value="1"/>
</dbReference>
<dbReference type="Pfam" id="PF08352">
    <property type="entry name" value="oligo_HPY"/>
    <property type="match status" value="1"/>
</dbReference>
<dbReference type="SMART" id="SM00382">
    <property type="entry name" value="AAA"/>
    <property type="match status" value="1"/>
</dbReference>
<dbReference type="SUPFAM" id="SSF52540">
    <property type="entry name" value="P-loop containing nucleoside triphosphate hydrolases"/>
    <property type="match status" value="1"/>
</dbReference>
<dbReference type="PROSITE" id="PS00211">
    <property type="entry name" value="ABC_TRANSPORTER_1"/>
    <property type="match status" value="1"/>
</dbReference>
<dbReference type="PROSITE" id="PS50893">
    <property type="entry name" value="ABC_TRANSPORTER_2"/>
    <property type="match status" value="1"/>
</dbReference>
<protein>
    <recommendedName>
        <fullName evidence="1">Dipeptide transport ATP-binding protein DppF</fullName>
        <ecNumber evidence="1">7.4.2.9</ecNumber>
    </recommendedName>
</protein>
<name>DPPF_HAEIN</name>
<comment type="function">
    <text evidence="1">Part of the ABC transporter DppBCDF involved in dipeptide transport. Responsible for energy coupling to the transport system.</text>
</comment>
<comment type="catalytic activity">
    <reaction evidence="1">
        <text>a dipeptide(out) + ATP + H2O = a dipeptide(in) + ADP + phosphate + H(+)</text>
        <dbReference type="Rhea" id="RHEA:23120"/>
        <dbReference type="ChEBI" id="CHEBI:15377"/>
        <dbReference type="ChEBI" id="CHEBI:15378"/>
        <dbReference type="ChEBI" id="CHEBI:30616"/>
        <dbReference type="ChEBI" id="CHEBI:43474"/>
        <dbReference type="ChEBI" id="CHEBI:90799"/>
        <dbReference type="ChEBI" id="CHEBI:456216"/>
        <dbReference type="EC" id="7.4.2.9"/>
    </reaction>
</comment>
<comment type="subcellular location">
    <subcellularLocation>
        <location evidence="3">Cell inner membrane</location>
        <topology evidence="3">Peripheral membrane protein</topology>
    </subcellularLocation>
</comment>
<comment type="similarity">
    <text evidence="3">Belongs to the ABC transporter superfamily.</text>
</comment>
<accession>P45094</accession>
<organism>
    <name type="scientific">Haemophilus influenzae (strain ATCC 51907 / DSM 11121 / KW20 / Rd)</name>
    <dbReference type="NCBI Taxonomy" id="71421"/>
    <lineage>
        <taxon>Bacteria</taxon>
        <taxon>Pseudomonadati</taxon>
        <taxon>Pseudomonadota</taxon>
        <taxon>Gammaproteobacteria</taxon>
        <taxon>Pasteurellales</taxon>
        <taxon>Pasteurellaceae</taxon>
        <taxon>Haemophilus</taxon>
    </lineage>
</organism>
<reference key="1">
    <citation type="journal article" date="1995" name="Science">
        <title>Whole-genome random sequencing and assembly of Haemophilus influenzae Rd.</title>
        <authorList>
            <person name="Fleischmann R.D."/>
            <person name="Adams M.D."/>
            <person name="White O."/>
            <person name="Clayton R.A."/>
            <person name="Kirkness E.F."/>
            <person name="Kerlavage A.R."/>
            <person name="Bult C.J."/>
            <person name="Tomb J.-F."/>
            <person name="Dougherty B.A."/>
            <person name="Merrick J.M."/>
            <person name="McKenney K."/>
            <person name="Sutton G.G."/>
            <person name="FitzHugh W."/>
            <person name="Fields C.A."/>
            <person name="Gocayne J.D."/>
            <person name="Scott J.D."/>
            <person name="Shirley R."/>
            <person name="Liu L.-I."/>
            <person name="Glodek A."/>
            <person name="Kelley J.M."/>
            <person name="Weidman J.F."/>
            <person name="Phillips C.A."/>
            <person name="Spriggs T."/>
            <person name="Hedblom E."/>
            <person name="Cotton M.D."/>
            <person name="Utterback T.R."/>
            <person name="Hanna M.C."/>
            <person name="Nguyen D.T."/>
            <person name="Saudek D.M."/>
            <person name="Brandon R.C."/>
            <person name="Fine L.D."/>
            <person name="Fritchman J.L."/>
            <person name="Fuhrmann J.L."/>
            <person name="Geoghagen N.S.M."/>
            <person name="Gnehm C.L."/>
            <person name="McDonald L.A."/>
            <person name="Small K.V."/>
            <person name="Fraser C.M."/>
            <person name="Smith H.O."/>
            <person name="Venter J.C."/>
        </authorList>
    </citation>
    <scope>NUCLEOTIDE SEQUENCE [LARGE SCALE GENOMIC DNA]</scope>
    <source>
        <strain>ATCC 51907 / DSM 11121 / KW20 / Rd</strain>
    </source>
</reference>
<reference key="2">
    <citation type="journal article" date="1996" name="J. Bacteriol.">
        <title>Altered lipopolysaccharide characteristic of the I69 phenotype in Haemophilus influenzae results from mutations in a novel gene, isn.</title>
        <authorList>
            <person name="Preston A."/>
            <person name="Maskell D."/>
            <person name="Johnson A."/>
            <person name="Moxon E.R."/>
        </authorList>
    </citation>
    <scope>NUCLEOTIDE SEQUENCE [GENOMIC DNA]</scope>
    <source>
        <strain>ATCC 51907 / DSM 11121 / KW20 / Rd</strain>
    </source>
</reference>